<reference key="1">
    <citation type="journal article" date="1992" name="Virology">
        <title>The nucleotide sequence and genome organization of the RNA2 and RNA3 segments in broad bean mottle virus.</title>
        <authorList>
            <person name="Romero J."/>
            <person name="Dzianott A.M."/>
            <person name="Bujarski J.J."/>
        </authorList>
    </citation>
    <scope>NUCLEOTIDE SEQUENCE [GENOMIC RNA]</scope>
</reference>
<organism>
    <name type="scientific">Broad bean mottle virus</name>
    <dbReference type="NCBI Taxonomy" id="12301"/>
    <lineage>
        <taxon>Viruses</taxon>
        <taxon>Riboviria</taxon>
        <taxon>Orthornavirae</taxon>
        <taxon>Kitrinoviricota</taxon>
        <taxon>Alsuviricetes</taxon>
        <taxon>Martellivirales</taxon>
        <taxon>Bromoviridae</taxon>
        <taxon>Bromovirus</taxon>
    </lineage>
</organism>
<protein>
    <recommendedName>
        <fullName>Movement protein</fullName>
        <shortName>MP</shortName>
    </recommendedName>
    <alternativeName>
        <fullName>Protein 3A</fullName>
    </alternativeName>
</protein>
<evidence type="ECO:0000250" key="1"/>
<evidence type="ECO:0000256" key="2">
    <source>
        <dbReference type="SAM" id="MobiDB-lite"/>
    </source>
</evidence>
<evidence type="ECO:0000305" key="3"/>
<dbReference type="EMBL" id="M60291">
    <property type="protein sequence ID" value="AAA42738.1"/>
    <property type="molecule type" value="Genomic_RNA"/>
</dbReference>
<dbReference type="PIR" id="B42453">
    <property type="entry name" value="P3WMBB"/>
</dbReference>
<dbReference type="RefSeq" id="NP_658997.1">
    <property type="nucleotide sequence ID" value="NC_004006.1"/>
</dbReference>
<dbReference type="KEGG" id="vg:962137"/>
<dbReference type="OrthoDB" id="11253at10239"/>
<dbReference type="Proteomes" id="UP000007448">
    <property type="component" value="Genome"/>
</dbReference>
<dbReference type="GO" id="GO:0044219">
    <property type="term" value="C:host cell plasmodesma"/>
    <property type="evidence" value="ECO:0007669"/>
    <property type="project" value="UniProtKB-SubCell"/>
</dbReference>
<dbReference type="GO" id="GO:0046740">
    <property type="term" value="P:transport of virus in host, cell to cell"/>
    <property type="evidence" value="ECO:0007669"/>
    <property type="project" value="UniProtKB-KW"/>
</dbReference>
<dbReference type="InterPro" id="IPR000603">
    <property type="entry name" value="MPV"/>
</dbReference>
<dbReference type="Pfam" id="PF00803">
    <property type="entry name" value="3A"/>
    <property type="match status" value="1"/>
</dbReference>
<sequence length="295" mass="32597">MSNISSLNPFSGSSRTLVENKQVGASDAESLLKEMFSLEAQKEYAKECNLGRYTELKANRRLNHIDLVPKVHGMKMLSMFRSEYDKGNVPSSGVLNIPRILLYLVRTSHSSTVGSITIRLVDTYSASDSCLLEAIDGQEFTVDLSSLPCMIGFSPTYDCKLEMVDGRRRCFGIVTELNGVIGEGHTVAMVHAYWKAMFRTKPGNYTRVKPAAKFIAPFDRLKQLSSGQLDAFIKGISNNSIDHGYLMGSTINNIKKKTNVKEESPTSDPQSGEVSSMTQSVPGAADTRIPKPRRR</sequence>
<name>MVP_BBMV</name>
<feature type="chain" id="PRO_0000083230" description="Movement protein">
    <location>
        <begin position="1"/>
        <end position="295"/>
    </location>
</feature>
<feature type="region of interest" description="Disordered" evidence="2">
    <location>
        <begin position="256"/>
        <end position="295"/>
    </location>
</feature>
<feature type="compositionally biased region" description="Polar residues" evidence="2">
    <location>
        <begin position="266"/>
        <end position="281"/>
    </location>
</feature>
<comment type="function">
    <text evidence="1">Transports viral genome to neighboring plant cells directly through plasmosdesmata, without any budding. The movement protein allows efficient cell to cell propagation, by bypassing the host cell wall barrier. Acts by forming a tubular structure at the host plasmodesmata, enlarging it enough to allow free passage of virion capsids (By similarity).</text>
</comment>
<comment type="subcellular location">
    <subcellularLocation>
        <location evidence="1">Host cell junction</location>
        <location evidence="1">Host plasmodesma</location>
    </subcellularLocation>
    <text evidence="1">Assembles into long tubular structures at the surface of the infected protoplast.</text>
</comment>
<comment type="similarity">
    <text evidence="3">Belongs to the bromovirus movement protein family.</text>
</comment>
<keyword id="KW-1031">Host cell junction</keyword>
<keyword id="KW-0813">Transport</keyword>
<keyword id="KW-0916">Viral movement protein</keyword>
<organismHost>
    <name type="scientific">Vicia faba</name>
    <name type="common">Broad bean</name>
    <name type="synonym">Faba vulgaris</name>
    <dbReference type="NCBI Taxonomy" id="3906"/>
</organismHost>
<proteinExistence type="inferred from homology"/>
<accession>P24403</accession>
<gene>
    <name type="ORF">ORF3a</name>
</gene>